<feature type="chain" id="PRO_0000227159" description="Anthranilate phosphoribosyltransferase">
    <location>
        <begin position="1"/>
        <end position="350"/>
    </location>
</feature>
<feature type="binding site" evidence="1">
    <location>
        <position position="94"/>
    </location>
    <ligand>
        <name>5-phospho-alpha-D-ribose 1-diphosphate</name>
        <dbReference type="ChEBI" id="CHEBI:58017"/>
    </ligand>
</feature>
<feature type="binding site" evidence="1">
    <location>
        <position position="94"/>
    </location>
    <ligand>
        <name>anthranilate</name>
        <dbReference type="ChEBI" id="CHEBI:16567"/>
        <label>1</label>
    </ligand>
</feature>
<feature type="binding site" evidence="1">
    <location>
        <begin position="97"/>
        <end position="98"/>
    </location>
    <ligand>
        <name>5-phospho-alpha-D-ribose 1-diphosphate</name>
        <dbReference type="ChEBI" id="CHEBI:58017"/>
    </ligand>
</feature>
<feature type="binding site" evidence="1">
    <location>
        <position position="102"/>
    </location>
    <ligand>
        <name>5-phospho-alpha-D-ribose 1-diphosphate</name>
        <dbReference type="ChEBI" id="CHEBI:58017"/>
    </ligand>
</feature>
<feature type="binding site" evidence="1">
    <location>
        <begin position="104"/>
        <end position="107"/>
    </location>
    <ligand>
        <name>5-phospho-alpha-D-ribose 1-diphosphate</name>
        <dbReference type="ChEBI" id="CHEBI:58017"/>
    </ligand>
</feature>
<feature type="binding site" evidence="1">
    <location>
        <position position="106"/>
    </location>
    <ligand>
        <name>Mg(2+)</name>
        <dbReference type="ChEBI" id="CHEBI:18420"/>
        <label>1</label>
    </ligand>
</feature>
<feature type="binding site" evidence="1">
    <location>
        <begin position="122"/>
        <end position="130"/>
    </location>
    <ligand>
        <name>5-phospho-alpha-D-ribose 1-diphosphate</name>
        <dbReference type="ChEBI" id="CHEBI:58017"/>
    </ligand>
</feature>
<feature type="binding site" evidence="1">
    <location>
        <position position="125"/>
    </location>
    <ligand>
        <name>anthranilate</name>
        <dbReference type="ChEBI" id="CHEBI:16567"/>
        <label>1</label>
    </ligand>
</feature>
<feature type="binding site" evidence="1">
    <location>
        <position position="134"/>
    </location>
    <ligand>
        <name>5-phospho-alpha-D-ribose 1-diphosphate</name>
        <dbReference type="ChEBI" id="CHEBI:58017"/>
    </ligand>
</feature>
<feature type="binding site" evidence="1">
    <location>
        <position position="180"/>
    </location>
    <ligand>
        <name>anthranilate</name>
        <dbReference type="ChEBI" id="CHEBI:16567"/>
        <label>2</label>
    </ligand>
</feature>
<feature type="binding site" evidence="1">
    <location>
        <position position="239"/>
    </location>
    <ligand>
        <name>Mg(2+)</name>
        <dbReference type="ChEBI" id="CHEBI:18420"/>
        <label>2</label>
    </ligand>
</feature>
<feature type="binding site" evidence="1">
    <location>
        <position position="240"/>
    </location>
    <ligand>
        <name>Mg(2+)</name>
        <dbReference type="ChEBI" id="CHEBI:18420"/>
        <label>1</label>
    </ligand>
</feature>
<feature type="binding site" evidence="1">
    <location>
        <position position="240"/>
    </location>
    <ligand>
        <name>Mg(2+)</name>
        <dbReference type="ChEBI" id="CHEBI:18420"/>
        <label>2</label>
    </ligand>
</feature>
<dbReference type="EC" id="2.4.2.18" evidence="1"/>
<dbReference type="EMBL" id="AE017180">
    <property type="protein sequence ID" value="AAR35754.1"/>
    <property type="molecule type" value="Genomic_DNA"/>
</dbReference>
<dbReference type="RefSeq" id="NP_953427.1">
    <property type="nucleotide sequence ID" value="NC_002939.5"/>
</dbReference>
<dbReference type="RefSeq" id="WP_010943017.1">
    <property type="nucleotide sequence ID" value="NC_002939.5"/>
</dbReference>
<dbReference type="SMR" id="Q74AH4"/>
<dbReference type="FunCoup" id="Q74AH4">
    <property type="interactions" value="433"/>
</dbReference>
<dbReference type="STRING" id="243231.GSU2381"/>
<dbReference type="EnsemblBacteria" id="AAR35754">
    <property type="protein sequence ID" value="AAR35754"/>
    <property type="gene ID" value="GSU2381"/>
</dbReference>
<dbReference type="KEGG" id="gsu:GSU2381"/>
<dbReference type="PATRIC" id="fig|243231.5.peg.2408"/>
<dbReference type="eggNOG" id="COG0547">
    <property type="taxonomic scope" value="Bacteria"/>
</dbReference>
<dbReference type="HOGENOM" id="CLU_034315_2_1_7"/>
<dbReference type="InParanoid" id="Q74AH4"/>
<dbReference type="OrthoDB" id="9806430at2"/>
<dbReference type="UniPathway" id="UPA00035">
    <property type="reaction ID" value="UER00041"/>
</dbReference>
<dbReference type="Proteomes" id="UP000000577">
    <property type="component" value="Chromosome"/>
</dbReference>
<dbReference type="GO" id="GO:0005829">
    <property type="term" value="C:cytosol"/>
    <property type="evidence" value="ECO:0000318"/>
    <property type="project" value="GO_Central"/>
</dbReference>
<dbReference type="GO" id="GO:0004048">
    <property type="term" value="F:anthranilate phosphoribosyltransferase activity"/>
    <property type="evidence" value="ECO:0007669"/>
    <property type="project" value="UniProtKB-UniRule"/>
</dbReference>
<dbReference type="GO" id="GO:0000287">
    <property type="term" value="F:magnesium ion binding"/>
    <property type="evidence" value="ECO:0007669"/>
    <property type="project" value="UniProtKB-UniRule"/>
</dbReference>
<dbReference type="GO" id="GO:0000162">
    <property type="term" value="P:L-tryptophan biosynthetic process"/>
    <property type="evidence" value="ECO:0000318"/>
    <property type="project" value="GO_Central"/>
</dbReference>
<dbReference type="FunFam" id="1.20.970.10:FF:000006">
    <property type="entry name" value="Anthranilate phosphoribosyltransferase"/>
    <property type="match status" value="1"/>
</dbReference>
<dbReference type="FunFam" id="3.40.1030.10:FF:000002">
    <property type="entry name" value="Anthranilate phosphoribosyltransferase"/>
    <property type="match status" value="1"/>
</dbReference>
<dbReference type="Gene3D" id="3.40.1030.10">
    <property type="entry name" value="Nucleoside phosphorylase/phosphoribosyltransferase catalytic domain"/>
    <property type="match status" value="1"/>
</dbReference>
<dbReference type="Gene3D" id="1.20.970.10">
    <property type="entry name" value="Transferase, Pyrimidine Nucleoside Phosphorylase, Chain C"/>
    <property type="match status" value="1"/>
</dbReference>
<dbReference type="HAMAP" id="MF_00211">
    <property type="entry name" value="TrpD"/>
    <property type="match status" value="1"/>
</dbReference>
<dbReference type="InterPro" id="IPR005940">
    <property type="entry name" value="Anthranilate_Pribosyl_Tfrase"/>
</dbReference>
<dbReference type="InterPro" id="IPR000312">
    <property type="entry name" value="Glycosyl_Trfase_fam3"/>
</dbReference>
<dbReference type="InterPro" id="IPR017459">
    <property type="entry name" value="Glycosyl_Trfase_fam3_N_dom"/>
</dbReference>
<dbReference type="InterPro" id="IPR036320">
    <property type="entry name" value="Glycosyl_Trfase_fam3_N_dom_sf"/>
</dbReference>
<dbReference type="InterPro" id="IPR035902">
    <property type="entry name" value="Nuc_phospho_transferase"/>
</dbReference>
<dbReference type="NCBIfam" id="TIGR01245">
    <property type="entry name" value="trpD"/>
    <property type="match status" value="1"/>
</dbReference>
<dbReference type="PANTHER" id="PTHR43285">
    <property type="entry name" value="ANTHRANILATE PHOSPHORIBOSYLTRANSFERASE"/>
    <property type="match status" value="1"/>
</dbReference>
<dbReference type="PANTHER" id="PTHR43285:SF2">
    <property type="entry name" value="ANTHRANILATE PHOSPHORIBOSYLTRANSFERASE"/>
    <property type="match status" value="1"/>
</dbReference>
<dbReference type="Pfam" id="PF02885">
    <property type="entry name" value="Glycos_trans_3N"/>
    <property type="match status" value="1"/>
</dbReference>
<dbReference type="Pfam" id="PF00591">
    <property type="entry name" value="Glycos_transf_3"/>
    <property type="match status" value="1"/>
</dbReference>
<dbReference type="SUPFAM" id="SSF52418">
    <property type="entry name" value="Nucleoside phosphorylase/phosphoribosyltransferase catalytic domain"/>
    <property type="match status" value="1"/>
</dbReference>
<dbReference type="SUPFAM" id="SSF47648">
    <property type="entry name" value="Nucleoside phosphorylase/phosphoribosyltransferase N-terminal domain"/>
    <property type="match status" value="1"/>
</dbReference>
<sequence>MIKKAIAKVVERIDLTEAEMIEVMDQIMSGGATPAQIAAFITALRMKGETVEEITGAARVMRDRATPIRVGKGVLDIDRDDINIDQETILDVVGTGGDGTNTFNISTTVSFVVASCGVKVAKHGNRAVSSACGSADVLESLGVNLDVTPETVEQAIAKIGIGFLFAPALHGAMKHAIGPRKEIGIRTIFNILGPLTNPAGADCQVLGVYREELVEPLARVLHKLGCRRGFVVHGMDGMDEITLTRETRIAEVTRDGVSVRTITPEEFGFASCPAGELRGGDAAGNARIVRGILEGATGPRRDVVLLNAAFGLVAAGKAVDPAEGVRIAAEAIDSGRALAKLEELITLTNE</sequence>
<organism>
    <name type="scientific">Geobacter sulfurreducens (strain ATCC 51573 / DSM 12127 / PCA)</name>
    <dbReference type="NCBI Taxonomy" id="243231"/>
    <lineage>
        <taxon>Bacteria</taxon>
        <taxon>Pseudomonadati</taxon>
        <taxon>Thermodesulfobacteriota</taxon>
        <taxon>Desulfuromonadia</taxon>
        <taxon>Geobacterales</taxon>
        <taxon>Geobacteraceae</taxon>
        <taxon>Geobacter</taxon>
    </lineage>
</organism>
<keyword id="KW-0028">Amino-acid biosynthesis</keyword>
<keyword id="KW-0057">Aromatic amino acid biosynthesis</keyword>
<keyword id="KW-0328">Glycosyltransferase</keyword>
<keyword id="KW-0460">Magnesium</keyword>
<keyword id="KW-0479">Metal-binding</keyword>
<keyword id="KW-1185">Reference proteome</keyword>
<keyword id="KW-0808">Transferase</keyword>
<keyword id="KW-0822">Tryptophan biosynthesis</keyword>
<accession>Q74AH4</accession>
<proteinExistence type="inferred from homology"/>
<comment type="function">
    <text evidence="1">Catalyzes the transfer of the phosphoribosyl group of 5-phosphorylribose-1-pyrophosphate (PRPP) to anthranilate to yield N-(5'-phosphoribosyl)-anthranilate (PRA).</text>
</comment>
<comment type="catalytic activity">
    <reaction evidence="1">
        <text>N-(5-phospho-beta-D-ribosyl)anthranilate + diphosphate = 5-phospho-alpha-D-ribose 1-diphosphate + anthranilate</text>
        <dbReference type="Rhea" id="RHEA:11768"/>
        <dbReference type="ChEBI" id="CHEBI:16567"/>
        <dbReference type="ChEBI" id="CHEBI:18277"/>
        <dbReference type="ChEBI" id="CHEBI:33019"/>
        <dbReference type="ChEBI" id="CHEBI:58017"/>
        <dbReference type="EC" id="2.4.2.18"/>
    </reaction>
</comment>
<comment type="cofactor">
    <cofactor evidence="1">
        <name>Mg(2+)</name>
        <dbReference type="ChEBI" id="CHEBI:18420"/>
    </cofactor>
    <text evidence="1">Binds 2 magnesium ions per monomer.</text>
</comment>
<comment type="pathway">
    <text evidence="1">Amino-acid biosynthesis; L-tryptophan biosynthesis; L-tryptophan from chorismate: step 2/5.</text>
</comment>
<comment type="subunit">
    <text evidence="1">Homodimer.</text>
</comment>
<comment type="similarity">
    <text evidence="1">Belongs to the anthranilate phosphoribosyltransferase family.</text>
</comment>
<name>TRPD_GEOSL</name>
<gene>
    <name evidence="1" type="primary">trpD</name>
    <name type="ordered locus">GSU2381</name>
</gene>
<reference key="1">
    <citation type="journal article" date="2003" name="Science">
        <title>Genome of Geobacter sulfurreducens: metal reduction in subsurface environments.</title>
        <authorList>
            <person name="Methe B.A."/>
            <person name="Nelson K.E."/>
            <person name="Eisen J.A."/>
            <person name="Paulsen I.T."/>
            <person name="Nelson W.C."/>
            <person name="Heidelberg J.F."/>
            <person name="Wu D."/>
            <person name="Wu M."/>
            <person name="Ward N.L."/>
            <person name="Beanan M.J."/>
            <person name="Dodson R.J."/>
            <person name="Madupu R."/>
            <person name="Brinkac L.M."/>
            <person name="Daugherty S.C."/>
            <person name="DeBoy R.T."/>
            <person name="Durkin A.S."/>
            <person name="Gwinn M.L."/>
            <person name="Kolonay J.F."/>
            <person name="Sullivan S.A."/>
            <person name="Haft D.H."/>
            <person name="Selengut J."/>
            <person name="Davidsen T.M."/>
            <person name="Zafar N."/>
            <person name="White O."/>
            <person name="Tran B."/>
            <person name="Romero C."/>
            <person name="Forberger H.A."/>
            <person name="Weidman J.F."/>
            <person name="Khouri H.M."/>
            <person name="Feldblyum T.V."/>
            <person name="Utterback T.R."/>
            <person name="Van Aken S.E."/>
            <person name="Lovley D.R."/>
            <person name="Fraser C.M."/>
        </authorList>
    </citation>
    <scope>NUCLEOTIDE SEQUENCE [LARGE SCALE GENOMIC DNA]</scope>
    <source>
        <strain>ATCC 51573 / DSM 12127 / PCA</strain>
    </source>
</reference>
<evidence type="ECO:0000255" key="1">
    <source>
        <dbReference type="HAMAP-Rule" id="MF_00211"/>
    </source>
</evidence>
<protein>
    <recommendedName>
        <fullName evidence="1">Anthranilate phosphoribosyltransferase</fullName>
        <ecNumber evidence="1">2.4.2.18</ecNumber>
    </recommendedName>
</protein>